<accession>P23926</accession>
<feature type="chain" id="PRO_0000100142" description="Transcriptional activator protein anr">
    <location>
        <begin position="1"/>
        <end position="244"/>
    </location>
</feature>
<feature type="domain" description="HTH crp-type" evidence="1">
    <location>
        <begin position="159"/>
        <end position="232"/>
    </location>
</feature>
<feature type="DNA-binding region" description="H-T-H motif" evidence="1">
    <location>
        <begin position="192"/>
        <end position="211"/>
    </location>
</feature>
<feature type="binding site">
    <location>
        <begin position="21"/>
        <end position="149"/>
    </location>
    <ligand>
        <name>a nucleoside 3',5'-cyclic phosphate</name>
        <dbReference type="ChEBI" id="CHEBI:58464"/>
    </ligand>
</feature>
<sequence>MAETIKVRALPQAHCKDCSLAPLCLPLSLTVEDMDSLDEIVKRGRPLKKGEFLFRQGDPFGSVFAVRSGALKTFSITDAGEEQITGFHLPSELVGLSGMDTETYPVSAQALETTSVCEIPFERLDELSEQLPQLRRQLMRLMSREIRDDQQMMLLLSKKTADERIATFLVNLSARFRARGFSAQQFRLAMSRNEIGNYLGLAVETVSRVFTRFQQNGLISAEGKEVHILDSIELCALAGGQLEG</sequence>
<dbReference type="EMBL" id="X58405">
    <property type="protein sequence ID" value="CAA41305.1"/>
    <property type="molecule type" value="Genomic_DNA"/>
</dbReference>
<dbReference type="EMBL" id="X57736">
    <property type="protein sequence ID" value="CAA40906.1"/>
    <property type="molecule type" value="Genomic_DNA"/>
</dbReference>
<dbReference type="EMBL" id="M98276">
    <property type="protein sequence ID" value="AAA25713.1"/>
    <property type="molecule type" value="Genomic_DNA"/>
</dbReference>
<dbReference type="EMBL" id="AE004091">
    <property type="protein sequence ID" value="AAG04933.1"/>
    <property type="molecule type" value="Genomic_DNA"/>
</dbReference>
<dbReference type="PIR" id="S16307">
    <property type="entry name" value="S16307"/>
</dbReference>
<dbReference type="RefSeq" id="NP_250235.1">
    <property type="nucleotide sequence ID" value="NC_002516.2"/>
</dbReference>
<dbReference type="RefSeq" id="WP_003087262.1">
    <property type="nucleotide sequence ID" value="NZ_QZGE01000032.1"/>
</dbReference>
<dbReference type="SMR" id="P23926"/>
<dbReference type="FunCoup" id="P23926">
    <property type="interactions" value="361"/>
</dbReference>
<dbReference type="STRING" id="208964.PA1544"/>
<dbReference type="PaxDb" id="208964-PA1544"/>
<dbReference type="GeneID" id="77221838"/>
<dbReference type="GeneID" id="883009"/>
<dbReference type="KEGG" id="pae:PA1544"/>
<dbReference type="PATRIC" id="fig|208964.12.peg.1597"/>
<dbReference type="PseudoCAP" id="PA1544"/>
<dbReference type="HOGENOM" id="CLU_075053_0_2_6"/>
<dbReference type="InParanoid" id="P23926"/>
<dbReference type="OrthoDB" id="7643467at2"/>
<dbReference type="PhylomeDB" id="P23926"/>
<dbReference type="BioCyc" id="PAER208964:G1FZ6-1572-MONOMER"/>
<dbReference type="PHI-base" id="PHI:4002"/>
<dbReference type="Proteomes" id="UP000002438">
    <property type="component" value="Chromosome"/>
</dbReference>
<dbReference type="GO" id="GO:0005829">
    <property type="term" value="C:cytosol"/>
    <property type="evidence" value="ECO:0000318"/>
    <property type="project" value="GO_Central"/>
</dbReference>
<dbReference type="GO" id="GO:0003677">
    <property type="term" value="F:DNA binding"/>
    <property type="evidence" value="ECO:0007669"/>
    <property type="project" value="UniProtKB-KW"/>
</dbReference>
<dbReference type="GO" id="GO:0003700">
    <property type="term" value="F:DNA-binding transcription factor activity"/>
    <property type="evidence" value="ECO:0000318"/>
    <property type="project" value="GO_Central"/>
</dbReference>
<dbReference type="GO" id="GO:0036294">
    <property type="term" value="P:cellular response to decreased oxygen levels"/>
    <property type="evidence" value="ECO:0000315"/>
    <property type="project" value="PseudoCAP"/>
</dbReference>
<dbReference type="GO" id="GO:0046202">
    <property type="term" value="P:cyanide biosynthetic process"/>
    <property type="evidence" value="ECO:0000315"/>
    <property type="project" value="PseudoCAP"/>
</dbReference>
<dbReference type="GO" id="GO:1900081">
    <property type="term" value="P:regulation of arginine catabolic process"/>
    <property type="evidence" value="ECO:0000315"/>
    <property type="project" value="PseudoCAP"/>
</dbReference>
<dbReference type="GO" id="GO:0006355">
    <property type="term" value="P:regulation of DNA-templated transcription"/>
    <property type="evidence" value="ECO:0000315"/>
    <property type="project" value="PseudoCAP"/>
</dbReference>
<dbReference type="GO" id="GO:0036293">
    <property type="term" value="P:response to decreased oxygen levels"/>
    <property type="evidence" value="ECO:0000314"/>
    <property type="project" value="PseudoCAP"/>
</dbReference>
<dbReference type="CDD" id="cd00038">
    <property type="entry name" value="CAP_ED"/>
    <property type="match status" value="1"/>
</dbReference>
<dbReference type="CDD" id="cd00092">
    <property type="entry name" value="HTH_CRP"/>
    <property type="match status" value="1"/>
</dbReference>
<dbReference type="FunFam" id="1.10.10.10:FF:000028">
    <property type="entry name" value="Fumarate/nitrate reduction transcriptional regulator Fnr"/>
    <property type="match status" value="1"/>
</dbReference>
<dbReference type="FunFam" id="2.60.120.10:FF:000004">
    <property type="entry name" value="Fumarate/nitrate reduction transcriptional regulator Fnr"/>
    <property type="match status" value="1"/>
</dbReference>
<dbReference type="Gene3D" id="2.60.120.10">
    <property type="entry name" value="Jelly Rolls"/>
    <property type="match status" value="1"/>
</dbReference>
<dbReference type="Gene3D" id="1.10.10.10">
    <property type="entry name" value="Winged helix-like DNA-binding domain superfamily/Winged helix DNA-binding domain"/>
    <property type="match status" value="1"/>
</dbReference>
<dbReference type="InterPro" id="IPR000595">
    <property type="entry name" value="cNMP-bd_dom"/>
</dbReference>
<dbReference type="InterPro" id="IPR018490">
    <property type="entry name" value="cNMP-bd_dom_sf"/>
</dbReference>
<dbReference type="InterPro" id="IPR050397">
    <property type="entry name" value="Env_Response_Regulators"/>
</dbReference>
<dbReference type="InterPro" id="IPR012318">
    <property type="entry name" value="HTH_CRP"/>
</dbReference>
<dbReference type="InterPro" id="IPR014710">
    <property type="entry name" value="RmlC-like_jellyroll"/>
</dbReference>
<dbReference type="InterPro" id="IPR018335">
    <property type="entry name" value="Tscrpt_reg_HTH_Crp-type_CS"/>
</dbReference>
<dbReference type="InterPro" id="IPR036388">
    <property type="entry name" value="WH-like_DNA-bd_sf"/>
</dbReference>
<dbReference type="InterPro" id="IPR036390">
    <property type="entry name" value="WH_DNA-bd_sf"/>
</dbReference>
<dbReference type="NCBIfam" id="NF008365">
    <property type="entry name" value="PRK11161.1"/>
    <property type="match status" value="1"/>
</dbReference>
<dbReference type="PANTHER" id="PTHR24567">
    <property type="entry name" value="CRP FAMILY TRANSCRIPTIONAL REGULATORY PROTEIN"/>
    <property type="match status" value="1"/>
</dbReference>
<dbReference type="PANTHER" id="PTHR24567:SF75">
    <property type="entry name" value="FUMARATE AND NITRATE REDUCTION REGULATORY PROTEIN"/>
    <property type="match status" value="1"/>
</dbReference>
<dbReference type="Pfam" id="PF00027">
    <property type="entry name" value="cNMP_binding"/>
    <property type="match status" value="1"/>
</dbReference>
<dbReference type="Pfam" id="PF00325">
    <property type="entry name" value="Crp"/>
    <property type="match status" value="1"/>
</dbReference>
<dbReference type="PRINTS" id="PR00034">
    <property type="entry name" value="HTHCRP"/>
</dbReference>
<dbReference type="SMART" id="SM00100">
    <property type="entry name" value="cNMP"/>
    <property type="match status" value="1"/>
</dbReference>
<dbReference type="SMART" id="SM00419">
    <property type="entry name" value="HTH_CRP"/>
    <property type="match status" value="1"/>
</dbReference>
<dbReference type="SUPFAM" id="SSF51206">
    <property type="entry name" value="cAMP-binding domain-like"/>
    <property type="match status" value="1"/>
</dbReference>
<dbReference type="SUPFAM" id="SSF46785">
    <property type="entry name" value="Winged helix' DNA-binding domain"/>
    <property type="match status" value="1"/>
</dbReference>
<dbReference type="PROSITE" id="PS50042">
    <property type="entry name" value="CNMP_BINDING_3"/>
    <property type="match status" value="1"/>
</dbReference>
<dbReference type="PROSITE" id="PS00042">
    <property type="entry name" value="HTH_CRP_1"/>
    <property type="match status" value="1"/>
</dbReference>
<dbReference type="PROSITE" id="PS51063">
    <property type="entry name" value="HTH_CRP_2"/>
    <property type="match status" value="1"/>
</dbReference>
<evidence type="ECO:0000255" key="1">
    <source>
        <dbReference type="PROSITE-ProRule" id="PRU00387"/>
    </source>
</evidence>
<gene>
    <name type="primary">anr</name>
    <name type="ordered locus">PA1544</name>
</gene>
<comment type="function">
    <text>Transcriptional activator of anaerobic gene expression.</text>
</comment>
<comment type="miscellaneous">
    <text>Possesses 4 cysteines which may bind a metal ion (possibly iron).</text>
</comment>
<reference key="1">
    <citation type="journal article" date="1991" name="Mol. Microbiol.">
        <title>Identification and molecular characterization of a transcriptional regulator from Pseudomonas aeruginosa PAO1 exhibiting structural and functional similarity to the FNR protein of Escherichia coli.</title>
        <authorList>
            <person name="Sawers R.G."/>
        </authorList>
    </citation>
    <scope>NUCLEOTIDE SEQUENCE [GENOMIC DNA]</scope>
    <source>
        <strain>ATCC 15692 / DSM 22644 / CIP 104116 / JCM 14847 / LMG 12228 / 1C / PRS 101 / PAO1</strain>
    </source>
</reference>
<reference key="2">
    <citation type="journal article" date="1991" name="Mol. Microbiol.">
        <title>Anaerobic growth and cyanide synthesis of Pseudomonas aeruginosa depend on anr, a regulatory gene homologous with fnr of Escherichia coli.</title>
        <authorList>
            <person name="Zimmermann A."/>
            <person name="Reimmann C."/>
            <person name="Galimand M."/>
            <person name="Haas D."/>
        </authorList>
    </citation>
    <scope>NUCLEOTIDE SEQUENCE [GENOMIC DNA]</scope>
    <source>
        <strain>ATCC 15692 / DSM 22644 / CIP 104116 / JCM 14847 / LMG 12228 / 1C / PRS 101 / PAO1</strain>
    </source>
</reference>
<reference key="3">
    <citation type="submission" date="1993-01" db="EMBL/GenBank/DDBJ databases">
        <title>RpoN-independent promoters having a conserved GG-N10-GC motif in Pseudomonas aeruginosa.</title>
        <authorList>
            <person name="Savioz A."/>
            <person name="Zimmermann A."/>
            <person name="Haas D."/>
        </authorList>
    </citation>
    <scope>NUCLEOTIDE SEQUENCE [GENOMIC DNA]</scope>
    <source>
        <strain>ATCC 15692 / DSM 22644 / CIP 104116 / JCM 14847 / LMG 12228 / 1C / PRS 101 / PAO1</strain>
    </source>
</reference>
<reference key="4">
    <citation type="journal article" date="2000" name="Nature">
        <title>Complete genome sequence of Pseudomonas aeruginosa PAO1, an opportunistic pathogen.</title>
        <authorList>
            <person name="Stover C.K."/>
            <person name="Pham X.-Q.T."/>
            <person name="Erwin A.L."/>
            <person name="Mizoguchi S.D."/>
            <person name="Warrener P."/>
            <person name="Hickey M.J."/>
            <person name="Brinkman F.S.L."/>
            <person name="Hufnagle W.O."/>
            <person name="Kowalik D.J."/>
            <person name="Lagrou M."/>
            <person name="Garber R.L."/>
            <person name="Goltry L."/>
            <person name="Tolentino E."/>
            <person name="Westbrock-Wadman S."/>
            <person name="Yuan Y."/>
            <person name="Brody L.L."/>
            <person name="Coulter S.N."/>
            <person name="Folger K.R."/>
            <person name="Kas A."/>
            <person name="Larbig K."/>
            <person name="Lim R.M."/>
            <person name="Smith K.A."/>
            <person name="Spencer D.H."/>
            <person name="Wong G.K.-S."/>
            <person name="Wu Z."/>
            <person name="Paulsen I.T."/>
            <person name="Reizer J."/>
            <person name="Saier M.H. Jr."/>
            <person name="Hancock R.E.W."/>
            <person name="Lory S."/>
            <person name="Olson M.V."/>
        </authorList>
    </citation>
    <scope>NUCLEOTIDE SEQUENCE [LARGE SCALE GENOMIC DNA]</scope>
    <source>
        <strain>ATCC 15692 / DSM 22644 / CIP 104116 / JCM 14847 / LMG 12228 / 1C / PRS 101 / PAO1</strain>
    </source>
</reference>
<name>ANR_PSEAE</name>
<keyword id="KW-0010">Activator</keyword>
<keyword id="KW-0238">DNA-binding</keyword>
<keyword id="KW-0408">Iron</keyword>
<keyword id="KW-1185">Reference proteome</keyword>
<keyword id="KW-0804">Transcription</keyword>
<keyword id="KW-0805">Transcription regulation</keyword>
<protein>
    <recommendedName>
        <fullName>Transcriptional activator protein anr</fullName>
    </recommendedName>
</protein>
<organism>
    <name type="scientific">Pseudomonas aeruginosa (strain ATCC 15692 / DSM 22644 / CIP 104116 / JCM 14847 / LMG 12228 / 1C / PRS 101 / PAO1)</name>
    <dbReference type="NCBI Taxonomy" id="208964"/>
    <lineage>
        <taxon>Bacteria</taxon>
        <taxon>Pseudomonadati</taxon>
        <taxon>Pseudomonadota</taxon>
        <taxon>Gammaproteobacteria</taxon>
        <taxon>Pseudomonadales</taxon>
        <taxon>Pseudomonadaceae</taxon>
        <taxon>Pseudomonas</taxon>
    </lineage>
</organism>
<proteinExistence type="predicted"/>